<keyword id="KW-0963">Cytoplasm</keyword>
<keyword id="KW-0342">GTP-binding</keyword>
<keyword id="KW-0436">Ligase</keyword>
<keyword id="KW-0460">Magnesium</keyword>
<keyword id="KW-0479">Metal-binding</keyword>
<keyword id="KW-0547">Nucleotide-binding</keyword>
<keyword id="KW-0658">Purine biosynthesis</keyword>
<accession>C1DLQ8</accession>
<dbReference type="EC" id="6.3.4.4" evidence="1"/>
<dbReference type="EMBL" id="CP001157">
    <property type="protein sequence ID" value="ACO77006.1"/>
    <property type="molecule type" value="Genomic_DNA"/>
</dbReference>
<dbReference type="RefSeq" id="WP_012699431.1">
    <property type="nucleotide sequence ID" value="NC_012560.1"/>
</dbReference>
<dbReference type="SMR" id="C1DLQ8"/>
<dbReference type="STRING" id="322710.Avin_07600"/>
<dbReference type="EnsemblBacteria" id="ACO77006">
    <property type="protein sequence ID" value="ACO77006"/>
    <property type="gene ID" value="Avin_07600"/>
</dbReference>
<dbReference type="GeneID" id="88184156"/>
<dbReference type="KEGG" id="avn:Avin_07600"/>
<dbReference type="eggNOG" id="COG0104">
    <property type="taxonomic scope" value="Bacteria"/>
</dbReference>
<dbReference type="HOGENOM" id="CLU_029848_0_0_6"/>
<dbReference type="OrthoDB" id="9807553at2"/>
<dbReference type="UniPathway" id="UPA00075">
    <property type="reaction ID" value="UER00335"/>
</dbReference>
<dbReference type="Proteomes" id="UP000002424">
    <property type="component" value="Chromosome"/>
</dbReference>
<dbReference type="GO" id="GO:0005737">
    <property type="term" value="C:cytoplasm"/>
    <property type="evidence" value="ECO:0007669"/>
    <property type="project" value="UniProtKB-SubCell"/>
</dbReference>
<dbReference type="GO" id="GO:0004019">
    <property type="term" value="F:adenylosuccinate synthase activity"/>
    <property type="evidence" value="ECO:0007669"/>
    <property type="project" value="UniProtKB-UniRule"/>
</dbReference>
<dbReference type="GO" id="GO:0005525">
    <property type="term" value="F:GTP binding"/>
    <property type="evidence" value="ECO:0007669"/>
    <property type="project" value="UniProtKB-UniRule"/>
</dbReference>
<dbReference type="GO" id="GO:0000287">
    <property type="term" value="F:magnesium ion binding"/>
    <property type="evidence" value="ECO:0007669"/>
    <property type="project" value="UniProtKB-UniRule"/>
</dbReference>
<dbReference type="GO" id="GO:0044208">
    <property type="term" value="P:'de novo' AMP biosynthetic process"/>
    <property type="evidence" value="ECO:0007669"/>
    <property type="project" value="UniProtKB-UniRule"/>
</dbReference>
<dbReference type="GO" id="GO:0046040">
    <property type="term" value="P:IMP metabolic process"/>
    <property type="evidence" value="ECO:0007669"/>
    <property type="project" value="TreeGrafter"/>
</dbReference>
<dbReference type="CDD" id="cd03108">
    <property type="entry name" value="AdSS"/>
    <property type="match status" value="1"/>
</dbReference>
<dbReference type="FunFam" id="1.10.300.10:FF:000001">
    <property type="entry name" value="Adenylosuccinate synthetase"/>
    <property type="match status" value="1"/>
</dbReference>
<dbReference type="FunFam" id="3.90.170.10:FF:000001">
    <property type="entry name" value="Adenylosuccinate synthetase"/>
    <property type="match status" value="1"/>
</dbReference>
<dbReference type="Gene3D" id="3.40.440.10">
    <property type="entry name" value="Adenylosuccinate Synthetase, subunit A, domain 1"/>
    <property type="match status" value="1"/>
</dbReference>
<dbReference type="Gene3D" id="1.10.300.10">
    <property type="entry name" value="Adenylosuccinate Synthetase, subunit A, domain 2"/>
    <property type="match status" value="1"/>
</dbReference>
<dbReference type="Gene3D" id="3.90.170.10">
    <property type="entry name" value="Adenylosuccinate Synthetase, subunit A, domain 3"/>
    <property type="match status" value="1"/>
</dbReference>
<dbReference type="HAMAP" id="MF_00011">
    <property type="entry name" value="Adenylosucc_synth"/>
    <property type="match status" value="1"/>
</dbReference>
<dbReference type="InterPro" id="IPR018220">
    <property type="entry name" value="Adenylosuccin_syn_GTP-bd"/>
</dbReference>
<dbReference type="InterPro" id="IPR033128">
    <property type="entry name" value="Adenylosuccin_syn_Lys_AS"/>
</dbReference>
<dbReference type="InterPro" id="IPR042109">
    <property type="entry name" value="Adenylosuccinate_synth_dom1"/>
</dbReference>
<dbReference type="InterPro" id="IPR042110">
    <property type="entry name" value="Adenylosuccinate_synth_dom2"/>
</dbReference>
<dbReference type="InterPro" id="IPR042111">
    <property type="entry name" value="Adenylosuccinate_synth_dom3"/>
</dbReference>
<dbReference type="InterPro" id="IPR001114">
    <property type="entry name" value="Adenylosuccinate_synthetase"/>
</dbReference>
<dbReference type="InterPro" id="IPR027417">
    <property type="entry name" value="P-loop_NTPase"/>
</dbReference>
<dbReference type="NCBIfam" id="NF002223">
    <property type="entry name" value="PRK01117.1"/>
    <property type="match status" value="1"/>
</dbReference>
<dbReference type="NCBIfam" id="TIGR00184">
    <property type="entry name" value="purA"/>
    <property type="match status" value="1"/>
</dbReference>
<dbReference type="PANTHER" id="PTHR11846">
    <property type="entry name" value="ADENYLOSUCCINATE SYNTHETASE"/>
    <property type="match status" value="1"/>
</dbReference>
<dbReference type="PANTHER" id="PTHR11846:SF0">
    <property type="entry name" value="ADENYLOSUCCINATE SYNTHETASE"/>
    <property type="match status" value="1"/>
</dbReference>
<dbReference type="Pfam" id="PF00709">
    <property type="entry name" value="Adenylsucc_synt"/>
    <property type="match status" value="1"/>
</dbReference>
<dbReference type="SMART" id="SM00788">
    <property type="entry name" value="Adenylsucc_synt"/>
    <property type="match status" value="1"/>
</dbReference>
<dbReference type="SUPFAM" id="SSF52540">
    <property type="entry name" value="P-loop containing nucleoside triphosphate hydrolases"/>
    <property type="match status" value="1"/>
</dbReference>
<dbReference type="PROSITE" id="PS01266">
    <property type="entry name" value="ADENYLOSUCCIN_SYN_1"/>
    <property type="match status" value="1"/>
</dbReference>
<dbReference type="PROSITE" id="PS00513">
    <property type="entry name" value="ADENYLOSUCCIN_SYN_2"/>
    <property type="match status" value="1"/>
</dbReference>
<comment type="function">
    <text evidence="1">Plays an important role in the de novo pathway of purine nucleotide biosynthesis. Catalyzes the first committed step in the biosynthesis of AMP from IMP.</text>
</comment>
<comment type="catalytic activity">
    <reaction evidence="1">
        <text>IMP + L-aspartate + GTP = N(6)-(1,2-dicarboxyethyl)-AMP + GDP + phosphate + 2 H(+)</text>
        <dbReference type="Rhea" id="RHEA:15753"/>
        <dbReference type="ChEBI" id="CHEBI:15378"/>
        <dbReference type="ChEBI" id="CHEBI:29991"/>
        <dbReference type="ChEBI" id="CHEBI:37565"/>
        <dbReference type="ChEBI" id="CHEBI:43474"/>
        <dbReference type="ChEBI" id="CHEBI:57567"/>
        <dbReference type="ChEBI" id="CHEBI:58053"/>
        <dbReference type="ChEBI" id="CHEBI:58189"/>
        <dbReference type="EC" id="6.3.4.4"/>
    </reaction>
</comment>
<comment type="cofactor">
    <cofactor evidence="1">
        <name>Mg(2+)</name>
        <dbReference type="ChEBI" id="CHEBI:18420"/>
    </cofactor>
    <text evidence="1">Binds 1 Mg(2+) ion per subunit.</text>
</comment>
<comment type="pathway">
    <text evidence="1">Purine metabolism; AMP biosynthesis via de novo pathway; AMP from IMP: step 1/2.</text>
</comment>
<comment type="subunit">
    <text evidence="1">Homodimer.</text>
</comment>
<comment type="subcellular location">
    <subcellularLocation>
        <location evidence="1">Cytoplasm</location>
    </subcellularLocation>
</comment>
<comment type="similarity">
    <text evidence="1">Belongs to the adenylosuccinate synthetase family.</text>
</comment>
<feature type="chain" id="PRO_1000201749" description="Adenylosuccinate synthetase">
    <location>
        <begin position="1"/>
        <end position="430"/>
    </location>
</feature>
<feature type="active site" description="Proton acceptor" evidence="1">
    <location>
        <position position="14"/>
    </location>
</feature>
<feature type="active site" description="Proton donor" evidence="1">
    <location>
        <position position="42"/>
    </location>
</feature>
<feature type="binding site" evidence="1">
    <location>
        <begin position="13"/>
        <end position="19"/>
    </location>
    <ligand>
        <name>GTP</name>
        <dbReference type="ChEBI" id="CHEBI:37565"/>
    </ligand>
</feature>
<feature type="binding site" description="in other chain" evidence="1">
    <location>
        <begin position="14"/>
        <end position="17"/>
    </location>
    <ligand>
        <name>IMP</name>
        <dbReference type="ChEBI" id="CHEBI:58053"/>
        <note>ligand shared between dimeric partners</note>
    </ligand>
</feature>
<feature type="binding site" evidence="1">
    <location>
        <position position="14"/>
    </location>
    <ligand>
        <name>Mg(2+)</name>
        <dbReference type="ChEBI" id="CHEBI:18420"/>
    </ligand>
</feature>
<feature type="binding site" description="in other chain" evidence="1">
    <location>
        <begin position="39"/>
        <end position="42"/>
    </location>
    <ligand>
        <name>IMP</name>
        <dbReference type="ChEBI" id="CHEBI:58053"/>
        <note>ligand shared between dimeric partners</note>
    </ligand>
</feature>
<feature type="binding site" evidence="1">
    <location>
        <begin position="41"/>
        <end position="43"/>
    </location>
    <ligand>
        <name>GTP</name>
        <dbReference type="ChEBI" id="CHEBI:37565"/>
    </ligand>
</feature>
<feature type="binding site" evidence="1">
    <location>
        <position position="41"/>
    </location>
    <ligand>
        <name>Mg(2+)</name>
        <dbReference type="ChEBI" id="CHEBI:18420"/>
    </ligand>
</feature>
<feature type="binding site" description="in other chain" evidence="1">
    <location>
        <position position="130"/>
    </location>
    <ligand>
        <name>IMP</name>
        <dbReference type="ChEBI" id="CHEBI:58053"/>
        <note>ligand shared between dimeric partners</note>
    </ligand>
</feature>
<feature type="binding site" evidence="1">
    <location>
        <position position="144"/>
    </location>
    <ligand>
        <name>IMP</name>
        <dbReference type="ChEBI" id="CHEBI:58053"/>
        <note>ligand shared between dimeric partners</note>
    </ligand>
</feature>
<feature type="binding site" description="in other chain" evidence="1">
    <location>
        <position position="225"/>
    </location>
    <ligand>
        <name>IMP</name>
        <dbReference type="ChEBI" id="CHEBI:58053"/>
        <note>ligand shared between dimeric partners</note>
    </ligand>
</feature>
<feature type="binding site" description="in other chain" evidence="1">
    <location>
        <position position="240"/>
    </location>
    <ligand>
        <name>IMP</name>
        <dbReference type="ChEBI" id="CHEBI:58053"/>
        <note>ligand shared between dimeric partners</note>
    </ligand>
</feature>
<feature type="binding site" evidence="1">
    <location>
        <begin position="300"/>
        <end position="306"/>
    </location>
    <ligand>
        <name>substrate</name>
    </ligand>
</feature>
<feature type="binding site" description="in other chain" evidence="1">
    <location>
        <position position="304"/>
    </location>
    <ligand>
        <name>IMP</name>
        <dbReference type="ChEBI" id="CHEBI:58053"/>
        <note>ligand shared between dimeric partners</note>
    </ligand>
</feature>
<feature type="binding site" evidence="1">
    <location>
        <position position="306"/>
    </location>
    <ligand>
        <name>GTP</name>
        <dbReference type="ChEBI" id="CHEBI:37565"/>
    </ligand>
</feature>
<feature type="binding site" evidence="1">
    <location>
        <begin position="332"/>
        <end position="334"/>
    </location>
    <ligand>
        <name>GTP</name>
        <dbReference type="ChEBI" id="CHEBI:37565"/>
    </ligand>
</feature>
<feature type="binding site" evidence="1">
    <location>
        <begin position="414"/>
        <end position="416"/>
    </location>
    <ligand>
        <name>GTP</name>
        <dbReference type="ChEBI" id="CHEBI:37565"/>
    </ligand>
</feature>
<gene>
    <name evidence="1" type="primary">purA</name>
    <name type="ordered locus">Avin_07600</name>
</gene>
<sequence>MGKNVVVLGTQWGDEGKGKIVDLLTDQAAAVVRYQGGHNAGHTLVIDGEKTVLHLIPSGILRDNVECLIGNGVVVAPDALLREIAKLEEKGVPVRERLRISPSCTLILPYHVALDQAREAVRSEGKIGTTGRGIGPAYEDKVARRGLRIGDLFNPERFAKKLHELLEYHNFVLQNFYKVEPVDFQKTLDEALGYAESLKPMIADVAARLHELRKQGARIMFEGAQGSLLDIDHGTYPYVTSSSTTAGGTATGSGFGPLYLDYILGITKAYTTRVGSGPFPTELFDDIGAHLASKGHEFGSTTGRARRCGWFDAVILRRAIEINSISGLCLTKLDVLDGLKTVKLCVAYRNAEGVVIEAPTDADSYVGLEPVYEEMPGWSESTVGIKSLAELPANALAYIKRIEALVGAPIDIISTGPDRNETIVLRHPFA</sequence>
<name>PURA_AZOVD</name>
<proteinExistence type="inferred from homology"/>
<evidence type="ECO:0000255" key="1">
    <source>
        <dbReference type="HAMAP-Rule" id="MF_00011"/>
    </source>
</evidence>
<organism>
    <name type="scientific">Azotobacter vinelandii (strain DJ / ATCC BAA-1303)</name>
    <dbReference type="NCBI Taxonomy" id="322710"/>
    <lineage>
        <taxon>Bacteria</taxon>
        <taxon>Pseudomonadati</taxon>
        <taxon>Pseudomonadota</taxon>
        <taxon>Gammaproteobacteria</taxon>
        <taxon>Pseudomonadales</taxon>
        <taxon>Pseudomonadaceae</taxon>
        <taxon>Azotobacter</taxon>
    </lineage>
</organism>
<protein>
    <recommendedName>
        <fullName evidence="1">Adenylosuccinate synthetase</fullName>
        <shortName evidence="1">AMPSase</shortName>
        <shortName evidence="1">AdSS</shortName>
        <ecNumber evidence="1">6.3.4.4</ecNumber>
    </recommendedName>
    <alternativeName>
        <fullName evidence="1">IMP--aspartate ligase</fullName>
    </alternativeName>
</protein>
<reference key="1">
    <citation type="journal article" date="2009" name="J. Bacteriol.">
        <title>Genome sequence of Azotobacter vinelandii, an obligate aerobe specialized to support diverse anaerobic metabolic processes.</title>
        <authorList>
            <person name="Setubal J.C."/>
            <person name="Dos Santos P."/>
            <person name="Goldman B.S."/>
            <person name="Ertesvaag H."/>
            <person name="Espin G."/>
            <person name="Rubio L.M."/>
            <person name="Valla S."/>
            <person name="Almeida N.F."/>
            <person name="Balasubramanian D."/>
            <person name="Cromes L."/>
            <person name="Curatti L."/>
            <person name="Du Z."/>
            <person name="Godsy E."/>
            <person name="Goodner B."/>
            <person name="Hellner-Burris K."/>
            <person name="Hernandez J.A."/>
            <person name="Houmiel K."/>
            <person name="Imperial J."/>
            <person name="Kennedy C."/>
            <person name="Larson T.J."/>
            <person name="Latreille P."/>
            <person name="Ligon L.S."/>
            <person name="Lu J."/>
            <person name="Maerk M."/>
            <person name="Miller N.M."/>
            <person name="Norton S."/>
            <person name="O'Carroll I.P."/>
            <person name="Paulsen I."/>
            <person name="Raulfs E.C."/>
            <person name="Roemer R."/>
            <person name="Rosser J."/>
            <person name="Segura D."/>
            <person name="Slater S."/>
            <person name="Stricklin S.L."/>
            <person name="Studholme D.J."/>
            <person name="Sun J."/>
            <person name="Viana C.J."/>
            <person name="Wallin E."/>
            <person name="Wang B."/>
            <person name="Wheeler C."/>
            <person name="Zhu H."/>
            <person name="Dean D.R."/>
            <person name="Dixon R."/>
            <person name="Wood D."/>
        </authorList>
    </citation>
    <scope>NUCLEOTIDE SEQUENCE [LARGE SCALE GENOMIC DNA]</scope>
    <source>
        <strain>DJ / ATCC BAA-1303</strain>
    </source>
</reference>